<name>KAD_GLOVI</name>
<sequence length="220" mass="24031">MATRRLMLLGAPGAGKGTQAQLLMQELGLPQVSTGDILRAAVKEGTPLGLEAQSYMNRGALVPDAVVVGLIEDRLARPDAGGGWILDGFPRTPAQAEALDGLLAHLAQSLEAVVLIDVPEAQLIERLTGRRTCPLCKRIFHVRFNPPPAAPPFCTDHTDCPSELVQRPDDTLEVVSKRLNVYRESTEPLIRYYQEQQKLTSVDGDRSPEVVYSELRELLG</sequence>
<accession>Q7NKT5</accession>
<keyword id="KW-0067">ATP-binding</keyword>
<keyword id="KW-0963">Cytoplasm</keyword>
<keyword id="KW-0418">Kinase</keyword>
<keyword id="KW-0479">Metal-binding</keyword>
<keyword id="KW-0545">Nucleotide biosynthesis</keyword>
<keyword id="KW-0547">Nucleotide-binding</keyword>
<keyword id="KW-1185">Reference proteome</keyword>
<keyword id="KW-0808">Transferase</keyword>
<keyword id="KW-0862">Zinc</keyword>
<dbReference type="EC" id="2.7.4.3" evidence="1"/>
<dbReference type="EMBL" id="BA000045">
    <property type="protein sequence ID" value="BAC89333.1"/>
    <property type="molecule type" value="Genomic_DNA"/>
</dbReference>
<dbReference type="RefSeq" id="NP_924338.1">
    <property type="nucleotide sequence ID" value="NC_005125.1"/>
</dbReference>
<dbReference type="SMR" id="Q7NKT5"/>
<dbReference type="FunCoup" id="Q7NKT5">
    <property type="interactions" value="390"/>
</dbReference>
<dbReference type="STRING" id="251221.gene:10758875"/>
<dbReference type="EnsemblBacteria" id="BAC89333">
    <property type="protein sequence ID" value="BAC89333"/>
    <property type="gene ID" value="BAC89333"/>
</dbReference>
<dbReference type="KEGG" id="gvi:gll1392"/>
<dbReference type="PATRIC" id="fig|251221.4.peg.1421"/>
<dbReference type="eggNOG" id="COG0563">
    <property type="taxonomic scope" value="Bacteria"/>
</dbReference>
<dbReference type="HOGENOM" id="CLU_032354_1_2_3"/>
<dbReference type="InParanoid" id="Q7NKT5"/>
<dbReference type="OrthoDB" id="9805030at2"/>
<dbReference type="PhylomeDB" id="Q7NKT5"/>
<dbReference type="UniPathway" id="UPA00588">
    <property type="reaction ID" value="UER00649"/>
</dbReference>
<dbReference type="Proteomes" id="UP000000557">
    <property type="component" value="Chromosome"/>
</dbReference>
<dbReference type="GO" id="GO:0005737">
    <property type="term" value="C:cytoplasm"/>
    <property type="evidence" value="ECO:0000318"/>
    <property type="project" value="GO_Central"/>
</dbReference>
<dbReference type="GO" id="GO:0005829">
    <property type="term" value="C:cytosol"/>
    <property type="evidence" value="ECO:0000318"/>
    <property type="project" value="GO_Central"/>
</dbReference>
<dbReference type="GO" id="GO:0004017">
    <property type="term" value="F:adenylate kinase activity"/>
    <property type="evidence" value="ECO:0000318"/>
    <property type="project" value="GO_Central"/>
</dbReference>
<dbReference type="GO" id="GO:0005524">
    <property type="term" value="F:ATP binding"/>
    <property type="evidence" value="ECO:0007669"/>
    <property type="project" value="UniProtKB-UniRule"/>
</dbReference>
<dbReference type="GO" id="GO:0046872">
    <property type="term" value="F:metal ion binding"/>
    <property type="evidence" value="ECO:0007669"/>
    <property type="project" value="UniProtKB-KW"/>
</dbReference>
<dbReference type="GO" id="GO:0004550">
    <property type="term" value="F:nucleoside diphosphate kinase activity"/>
    <property type="evidence" value="ECO:0000318"/>
    <property type="project" value="GO_Central"/>
</dbReference>
<dbReference type="GO" id="GO:0044209">
    <property type="term" value="P:AMP salvage"/>
    <property type="evidence" value="ECO:0007669"/>
    <property type="project" value="UniProtKB-UniRule"/>
</dbReference>
<dbReference type="GO" id="GO:0009132">
    <property type="term" value="P:nucleoside diphosphate metabolic process"/>
    <property type="evidence" value="ECO:0000318"/>
    <property type="project" value="GO_Central"/>
</dbReference>
<dbReference type="GO" id="GO:0009123">
    <property type="term" value="P:nucleoside monophosphate metabolic process"/>
    <property type="evidence" value="ECO:0000318"/>
    <property type="project" value="GO_Central"/>
</dbReference>
<dbReference type="CDD" id="cd01428">
    <property type="entry name" value="ADK"/>
    <property type="match status" value="1"/>
</dbReference>
<dbReference type="FunFam" id="3.40.50.300:FF:000106">
    <property type="entry name" value="Adenylate kinase mitochondrial"/>
    <property type="match status" value="1"/>
</dbReference>
<dbReference type="Gene3D" id="3.40.50.300">
    <property type="entry name" value="P-loop containing nucleotide triphosphate hydrolases"/>
    <property type="match status" value="1"/>
</dbReference>
<dbReference type="HAMAP" id="MF_00235">
    <property type="entry name" value="Adenylate_kinase_Adk"/>
    <property type="match status" value="1"/>
</dbReference>
<dbReference type="InterPro" id="IPR006259">
    <property type="entry name" value="Adenyl_kin_sub"/>
</dbReference>
<dbReference type="InterPro" id="IPR000850">
    <property type="entry name" value="Adenylat/UMP-CMP_kin"/>
</dbReference>
<dbReference type="InterPro" id="IPR033690">
    <property type="entry name" value="Adenylat_kinase_CS"/>
</dbReference>
<dbReference type="InterPro" id="IPR007862">
    <property type="entry name" value="Adenylate_kinase_lid-dom"/>
</dbReference>
<dbReference type="InterPro" id="IPR027417">
    <property type="entry name" value="P-loop_NTPase"/>
</dbReference>
<dbReference type="NCBIfam" id="TIGR01351">
    <property type="entry name" value="adk"/>
    <property type="match status" value="1"/>
</dbReference>
<dbReference type="NCBIfam" id="NF001380">
    <property type="entry name" value="PRK00279.1-2"/>
    <property type="match status" value="1"/>
</dbReference>
<dbReference type="NCBIfam" id="NF001381">
    <property type="entry name" value="PRK00279.1-3"/>
    <property type="match status" value="1"/>
</dbReference>
<dbReference type="NCBIfam" id="NF011100">
    <property type="entry name" value="PRK14527.1"/>
    <property type="match status" value="1"/>
</dbReference>
<dbReference type="PANTHER" id="PTHR23359">
    <property type="entry name" value="NUCLEOTIDE KINASE"/>
    <property type="match status" value="1"/>
</dbReference>
<dbReference type="Pfam" id="PF00406">
    <property type="entry name" value="ADK"/>
    <property type="match status" value="1"/>
</dbReference>
<dbReference type="Pfam" id="PF05191">
    <property type="entry name" value="ADK_lid"/>
    <property type="match status" value="1"/>
</dbReference>
<dbReference type="PRINTS" id="PR00094">
    <property type="entry name" value="ADENYLTKNASE"/>
</dbReference>
<dbReference type="SUPFAM" id="SSF52540">
    <property type="entry name" value="P-loop containing nucleoside triphosphate hydrolases"/>
    <property type="match status" value="1"/>
</dbReference>
<dbReference type="PROSITE" id="PS00113">
    <property type="entry name" value="ADENYLATE_KINASE"/>
    <property type="match status" value="1"/>
</dbReference>
<organism>
    <name type="scientific">Gloeobacter violaceus (strain ATCC 29082 / PCC 7421)</name>
    <dbReference type="NCBI Taxonomy" id="251221"/>
    <lineage>
        <taxon>Bacteria</taxon>
        <taxon>Bacillati</taxon>
        <taxon>Cyanobacteriota</taxon>
        <taxon>Cyanophyceae</taxon>
        <taxon>Gloeobacterales</taxon>
        <taxon>Gloeobacteraceae</taxon>
        <taxon>Gloeobacter</taxon>
    </lineage>
</organism>
<feature type="chain" id="PRO_0000158774" description="Adenylate kinase">
    <location>
        <begin position="1"/>
        <end position="220"/>
    </location>
</feature>
<feature type="region of interest" description="NMP" evidence="1">
    <location>
        <begin position="33"/>
        <end position="62"/>
    </location>
</feature>
<feature type="region of interest" description="LID" evidence="1">
    <location>
        <begin position="129"/>
        <end position="170"/>
    </location>
</feature>
<feature type="binding site" evidence="1">
    <location>
        <begin position="13"/>
        <end position="18"/>
    </location>
    <ligand>
        <name>ATP</name>
        <dbReference type="ChEBI" id="CHEBI:30616"/>
    </ligand>
</feature>
<feature type="binding site" evidence="1">
    <location>
        <position position="34"/>
    </location>
    <ligand>
        <name>AMP</name>
        <dbReference type="ChEBI" id="CHEBI:456215"/>
    </ligand>
</feature>
<feature type="binding site" evidence="1">
    <location>
        <position position="39"/>
    </location>
    <ligand>
        <name>AMP</name>
        <dbReference type="ChEBI" id="CHEBI:456215"/>
    </ligand>
</feature>
<feature type="binding site" evidence="1">
    <location>
        <begin position="60"/>
        <end position="62"/>
    </location>
    <ligand>
        <name>AMP</name>
        <dbReference type="ChEBI" id="CHEBI:456215"/>
    </ligand>
</feature>
<feature type="binding site" evidence="1">
    <location>
        <begin position="88"/>
        <end position="91"/>
    </location>
    <ligand>
        <name>AMP</name>
        <dbReference type="ChEBI" id="CHEBI:456215"/>
    </ligand>
</feature>
<feature type="binding site" evidence="1">
    <location>
        <position position="95"/>
    </location>
    <ligand>
        <name>AMP</name>
        <dbReference type="ChEBI" id="CHEBI:456215"/>
    </ligand>
</feature>
<feature type="binding site" evidence="1">
    <location>
        <position position="130"/>
    </location>
    <ligand>
        <name>ATP</name>
        <dbReference type="ChEBI" id="CHEBI:30616"/>
    </ligand>
</feature>
<feature type="binding site" evidence="1">
    <location>
        <position position="133"/>
    </location>
    <ligand>
        <name>Zn(2+)</name>
        <dbReference type="ChEBI" id="CHEBI:29105"/>
        <note>structural</note>
    </ligand>
</feature>
<feature type="binding site" evidence="1">
    <location>
        <position position="136"/>
    </location>
    <ligand>
        <name>Zn(2+)</name>
        <dbReference type="ChEBI" id="CHEBI:29105"/>
        <note>structural</note>
    </ligand>
</feature>
<feature type="binding site" evidence="1">
    <location>
        <begin position="139"/>
        <end position="140"/>
    </location>
    <ligand>
        <name>ATP</name>
        <dbReference type="ChEBI" id="CHEBI:30616"/>
    </ligand>
</feature>
<feature type="binding site" evidence="1">
    <location>
        <position position="156"/>
    </location>
    <ligand>
        <name>Zn(2+)</name>
        <dbReference type="ChEBI" id="CHEBI:29105"/>
        <note>structural</note>
    </ligand>
</feature>
<feature type="binding site" evidence="1">
    <location>
        <position position="160"/>
    </location>
    <ligand>
        <name>Zn(2+)</name>
        <dbReference type="ChEBI" id="CHEBI:29105"/>
        <note>structural</note>
    </ligand>
</feature>
<feature type="binding site" evidence="1">
    <location>
        <position position="167"/>
    </location>
    <ligand>
        <name>AMP</name>
        <dbReference type="ChEBI" id="CHEBI:456215"/>
    </ligand>
</feature>
<feature type="binding site" evidence="1">
    <location>
        <position position="178"/>
    </location>
    <ligand>
        <name>AMP</name>
        <dbReference type="ChEBI" id="CHEBI:456215"/>
    </ligand>
</feature>
<feature type="binding site" evidence="1">
    <location>
        <position position="206"/>
    </location>
    <ligand>
        <name>ATP</name>
        <dbReference type="ChEBI" id="CHEBI:30616"/>
    </ligand>
</feature>
<reference key="1">
    <citation type="journal article" date="2003" name="DNA Res.">
        <title>Complete genome structure of Gloeobacter violaceus PCC 7421, a cyanobacterium that lacks thylakoids.</title>
        <authorList>
            <person name="Nakamura Y."/>
            <person name="Kaneko T."/>
            <person name="Sato S."/>
            <person name="Mimuro M."/>
            <person name="Miyashita H."/>
            <person name="Tsuchiya T."/>
            <person name="Sasamoto S."/>
            <person name="Watanabe A."/>
            <person name="Kawashima K."/>
            <person name="Kishida Y."/>
            <person name="Kiyokawa C."/>
            <person name="Kohara M."/>
            <person name="Matsumoto M."/>
            <person name="Matsuno A."/>
            <person name="Nakazaki N."/>
            <person name="Shimpo S."/>
            <person name="Takeuchi C."/>
            <person name="Yamada M."/>
            <person name="Tabata S."/>
        </authorList>
    </citation>
    <scope>NUCLEOTIDE SEQUENCE [LARGE SCALE GENOMIC DNA]</scope>
    <source>
        <strain>ATCC 29082 / PCC 7421</strain>
    </source>
</reference>
<proteinExistence type="inferred from homology"/>
<comment type="function">
    <text evidence="1">Catalyzes the reversible transfer of the terminal phosphate group between ATP and AMP. Plays an important role in cellular energy homeostasis and in adenine nucleotide metabolism.</text>
</comment>
<comment type="catalytic activity">
    <reaction evidence="1">
        <text>AMP + ATP = 2 ADP</text>
        <dbReference type="Rhea" id="RHEA:12973"/>
        <dbReference type="ChEBI" id="CHEBI:30616"/>
        <dbReference type="ChEBI" id="CHEBI:456215"/>
        <dbReference type="ChEBI" id="CHEBI:456216"/>
        <dbReference type="EC" id="2.7.4.3"/>
    </reaction>
</comment>
<comment type="pathway">
    <text evidence="1">Purine metabolism; AMP biosynthesis via salvage pathway; AMP from ADP: step 1/1.</text>
</comment>
<comment type="subunit">
    <text evidence="1">Monomer.</text>
</comment>
<comment type="subcellular location">
    <subcellularLocation>
        <location evidence="1">Cytoplasm</location>
    </subcellularLocation>
</comment>
<comment type="domain">
    <text evidence="1">Consists of three domains, a large central CORE domain and two small peripheral domains, NMPbind and LID, which undergo movements during catalysis. The LID domain closes over the site of phosphoryl transfer upon ATP binding. Assembling and dissambling the active center during each catalytic cycle provides an effective means to prevent ATP hydrolysis. Some bacteria have evolved a zinc-coordinating structure that stabilizes the LID domain.</text>
</comment>
<comment type="similarity">
    <text evidence="1">Belongs to the adenylate kinase family.</text>
</comment>
<protein>
    <recommendedName>
        <fullName evidence="1">Adenylate kinase</fullName>
        <shortName evidence="1">AK</shortName>
        <ecNumber evidence="1">2.7.4.3</ecNumber>
    </recommendedName>
    <alternativeName>
        <fullName evidence="1">ATP-AMP transphosphorylase</fullName>
    </alternativeName>
    <alternativeName>
        <fullName evidence="1">ATP:AMP phosphotransferase</fullName>
    </alternativeName>
    <alternativeName>
        <fullName evidence="1">Adenylate monophosphate kinase</fullName>
    </alternativeName>
</protein>
<evidence type="ECO:0000255" key="1">
    <source>
        <dbReference type="HAMAP-Rule" id="MF_00235"/>
    </source>
</evidence>
<gene>
    <name evidence="1" type="primary">adk</name>
    <name type="ordered locus">gll1392</name>
</gene>